<dbReference type="EC" id="2.7.7.8" evidence="1"/>
<dbReference type="EMBL" id="CP000053">
    <property type="protein sequence ID" value="AAY61572.1"/>
    <property type="molecule type" value="Genomic_DNA"/>
</dbReference>
<dbReference type="SMR" id="Q4ULK1"/>
<dbReference type="STRING" id="315456.RF_0721"/>
<dbReference type="KEGG" id="rfe:RF_0721"/>
<dbReference type="eggNOG" id="COG1185">
    <property type="taxonomic scope" value="Bacteria"/>
</dbReference>
<dbReference type="HOGENOM" id="CLU_004217_2_2_5"/>
<dbReference type="OrthoDB" id="9804305at2"/>
<dbReference type="Proteomes" id="UP000008548">
    <property type="component" value="Chromosome"/>
</dbReference>
<dbReference type="GO" id="GO:0005829">
    <property type="term" value="C:cytosol"/>
    <property type="evidence" value="ECO:0007669"/>
    <property type="project" value="TreeGrafter"/>
</dbReference>
<dbReference type="GO" id="GO:0000175">
    <property type="term" value="F:3'-5'-RNA exonuclease activity"/>
    <property type="evidence" value="ECO:0007669"/>
    <property type="project" value="TreeGrafter"/>
</dbReference>
<dbReference type="GO" id="GO:0000287">
    <property type="term" value="F:magnesium ion binding"/>
    <property type="evidence" value="ECO:0007669"/>
    <property type="project" value="UniProtKB-UniRule"/>
</dbReference>
<dbReference type="GO" id="GO:0004654">
    <property type="term" value="F:polyribonucleotide nucleotidyltransferase activity"/>
    <property type="evidence" value="ECO:0007669"/>
    <property type="project" value="UniProtKB-UniRule"/>
</dbReference>
<dbReference type="GO" id="GO:0003723">
    <property type="term" value="F:RNA binding"/>
    <property type="evidence" value="ECO:0007669"/>
    <property type="project" value="UniProtKB-UniRule"/>
</dbReference>
<dbReference type="GO" id="GO:0006402">
    <property type="term" value="P:mRNA catabolic process"/>
    <property type="evidence" value="ECO:0007669"/>
    <property type="project" value="UniProtKB-UniRule"/>
</dbReference>
<dbReference type="GO" id="GO:0006396">
    <property type="term" value="P:RNA processing"/>
    <property type="evidence" value="ECO:0007669"/>
    <property type="project" value="InterPro"/>
</dbReference>
<dbReference type="CDD" id="cd02393">
    <property type="entry name" value="KH-I_PNPase"/>
    <property type="match status" value="1"/>
</dbReference>
<dbReference type="CDD" id="cd11363">
    <property type="entry name" value="RNase_PH_PNPase_1"/>
    <property type="match status" value="1"/>
</dbReference>
<dbReference type="CDD" id="cd11364">
    <property type="entry name" value="RNase_PH_PNPase_2"/>
    <property type="match status" value="1"/>
</dbReference>
<dbReference type="FunFam" id="3.30.1370.10:FF:000001">
    <property type="entry name" value="Polyribonucleotide nucleotidyltransferase"/>
    <property type="match status" value="1"/>
</dbReference>
<dbReference type="FunFam" id="3.30.230.70:FF:000001">
    <property type="entry name" value="Polyribonucleotide nucleotidyltransferase"/>
    <property type="match status" value="1"/>
</dbReference>
<dbReference type="FunFam" id="3.30.230.70:FF:000002">
    <property type="entry name" value="Polyribonucleotide nucleotidyltransferase"/>
    <property type="match status" value="1"/>
</dbReference>
<dbReference type="FunFam" id="2.40.50.140:FF:000189">
    <property type="entry name" value="Polyribonucleotide nucleotidyltransferase, putative"/>
    <property type="match status" value="1"/>
</dbReference>
<dbReference type="Gene3D" id="3.30.230.70">
    <property type="entry name" value="GHMP Kinase, N-terminal domain"/>
    <property type="match status" value="2"/>
</dbReference>
<dbReference type="Gene3D" id="3.30.1370.10">
    <property type="entry name" value="K Homology domain, type 1"/>
    <property type="match status" value="1"/>
</dbReference>
<dbReference type="Gene3D" id="2.40.50.140">
    <property type="entry name" value="Nucleic acid-binding proteins"/>
    <property type="match status" value="1"/>
</dbReference>
<dbReference type="HAMAP" id="MF_01595">
    <property type="entry name" value="PNPase"/>
    <property type="match status" value="1"/>
</dbReference>
<dbReference type="InterPro" id="IPR001247">
    <property type="entry name" value="ExoRNase_PH_dom1"/>
</dbReference>
<dbReference type="InterPro" id="IPR015847">
    <property type="entry name" value="ExoRNase_PH_dom2"/>
</dbReference>
<dbReference type="InterPro" id="IPR036345">
    <property type="entry name" value="ExoRNase_PH_dom2_sf"/>
</dbReference>
<dbReference type="InterPro" id="IPR004087">
    <property type="entry name" value="KH_dom"/>
</dbReference>
<dbReference type="InterPro" id="IPR004088">
    <property type="entry name" value="KH_dom_type_1"/>
</dbReference>
<dbReference type="InterPro" id="IPR036612">
    <property type="entry name" value="KH_dom_type_1_sf"/>
</dbReference>
<dbReference type="InterPro" id="IPR012340">
    <property type="entry name" value="NA-bd_OB-fold"/>
</dbReference>
<dbReference type="InterPro" id="IPR012162">
    <property type="entry name" value="PNPase"/>
</dbReference>
<dbReference type="InterPro" id="IPR027408">
    <property type="entry name" value="PNPase/RNase_PH_dom_sf"/>
</dbReference>
<dbReference type="InterPro" id="IPR015848">
    <property type="entry name" value="PNPase_PH_RNA-bd_bac/org-type"/>
</dbReference>
<dbReference type="InterPro" id="IPR036456">
    <property type="entry name" value="PNPase_PH_RNA-bd_sf"/>
</dbReference>
<dbReference type="InterPro" id="IPR020568">
    <property type="entry name" value="Ribosomal_Su5_D2-typ_SF"/>
</dbReference>
<dbReference type="InterPro" id="IPR003029">
    <property type="entry name" value="S1_domain"/>
</dbReference>
<dbReference type="NCBIfam" id="TIGR03591">
    <property type="entry name" value="polynuc_phos"/>
    <property type="match status" value="1"/>
</dbReference>
<dbReference type="NCBIfam" id="NF008805">
    <property type="entry name" value="PRK11824.1"/>
    <property type="match status" value="1"/>
</dbReference>
<dbReference type="PANTHER" id="PTHR11252">
    <property type="entry name" value="POLYRIBONUCLEOTIDE NUCLEOTIDYLTRANSFERASE"/>
    <property type="match status" value="1"/>
</dbReference>
<dbReference type="PANTHER" id="PTHR11252:SF0">
    <property type="entry name" value="POLYRIBONUCLEOTIDE NUCLEOTIDYLTRANSFERASE 1, MITOCHONDRIAL"/>
    <property type="match status" value="1"/>
</dbReference>
<dbReference type="Pfam" id="PF00013">
    <property type="entry name" value="KH_1"/>
    <property type="match status" value="1"/>
</dbReference>
<dbReference type="Pfam" id="PF03726">
    <property type="entry name" value="PNPase"/>
    <property type="match status" value="1"/>
</dbReference>
<dbReference type="Pfam" id="PF01138">
    <property type="entry name" value="RNase_PH"/>
    <property type="match status" value="2"/>
</dbReference>
<dbReference type="Pfam" id="PF03725">
    <property type="entry name" value="RNase_PH_C"/>
    <property type="match status" value="1"/>
</dbReference>
<dbReference type="Pfam" id="PF00575">
    <property type="entry name" value="S1"/>
    <property type="match status" value="1"/>
</dbReference>
<dbReference type="PIRSF" id="PIRSF005499">
    <property type="entry name" value="PNPase"/>
    <property type="match status" value="1"/>
</dbReference>
<dbReference type="SMART" id="SM00322">
    <property type="entry name" value="KH"/>
    <property type="match status" value="1"/>
</dbReference>
<dbReference type="SMART" id="SM00316">
    <property type="entry name" value="S1"/>
    <property type="match status" value="1"/>
</dbReference>
<dbReference type="SUPFAM" id="SSF54791">
    <property type="entry name" value="Eukaryotic type KH-domain (KH-domain type I)"/>
    <property type="match status" value="1"/>
</dbReference>
<dbReference type="SUPFAM" id="SSF50249">
    <property type="entry name" value="Nucleic acid-binding proteins"/>
    <property type="match status" value="1"/>
</dbReference>
<dbReference type="SUPFAM" id="SSF46915">
    <property type="entry name" value="Polynucleotide phosphorylase/guanosine pentaphosphate synthase (PNPase/GPSI), domain 3"/>
    <property type="match status" value="1"/>
</dbReference>
<dbReference type="SUPFAM" id="SSF55666">
    <property type="entry name" value="Ribonuclease PH domain 2-like"/>
    <property type="match status" value="2"/>
</dbReference>
<dbReference type="SUPFAM" id="SSF54211">
    <property type="entry name" value="Ribosomal protein S5 domain 2-like"/>
    <property type="match status" value="2"/>
</dbReference>
<dbReference type="PROSITE" id="PS50084">
    <property type="entry name" value="KH_TYPE_1"/>
    <property type="match status" value="1"/>
</dbReference>
<dbReference type="PROSITE" id="PS50126">
    <property type="entry name" value="S1"/>
    <property type="match status" value="1"/>
</dbReference>
<accession>Q4ULK1</accession>
<gene>
    <name evidence="1" type="primary">pnp</name>
    <name type="ordered locus">RF_0721</name>
</gene>
<reference key="1">
    <citation type="journal article" date="2005" name="PLoS Biol.">
        <title>The genome sequence of Rickettsia felis identifies the first putative conjugative plasmid in an obligate intracellular parasite.</title>
        <authorList>
            <person name="Ogata H."/>
            <person name="Renesto P."/>
            <person name="Audic S."/>
            <person name="Robert C."/>
            <person name="Blanc G."/>
            <person name="Fournier P.-E."/>
            <person name="Parinello H."/>
            <person name="Claverie J.-M."/>
            <person name="Raoult D."/>
        </authorList>
    </citation>
    <scope>NUCLEOTIDE SEQUENCE [LARGE SCALE GENOMIC DNA]</scope>
    <source>
        <strain>ATCC VR-1525 / URRWXCal2</strain>
    </source>
</reference>
<feature type="chain" id="PRO_0000289282" description="Polyribonucleotide nucleotidyltransferase">
    <location>
        <begin position="1"/>
        <end position="747"/>
    </location>
</feature>
<feature type="domain" description="KH" evidence="1">
    <location>
        <begin position="554"/>
        <end position="613"/>
    </location>
</feature>
<feature type="domain" description="S1 motif" evidence="1">
    <location>
        <begin position="623"/>
        <end position="691"/>
    </location>
</feature>
<feature type="region of interest" description="Disordered" evidence="2">
    <location>
        <begin position="691"/>
        <end position="747"/>
    </location>
</feature>
<feature type="compositionally biased region" description="Low complexity" evidence="2">
    <location>
        <begin position="699"/>
        <end position="712"/>
    </location>
</feature>
<feature type="compositionally biased region" description="Basic and acidic residues" evidence="2">
    <location>
        <begin position="727"/>
        <end position="747"/>
    </location>
</feature>
<feature type="binding site" evidence="1">
    <location>
        <position position="487"/>
    </location>
    <ligand>
        <name>Mg(2+)</name>
        <dbReference type="ChEBI" id="CHEBI:18420"/>
    </ligand>
</feature>
<feature type="binding site" evidence="1">
    <location>
        <position position="493"/>
    </location>
    <ligand>
        <name>Mg(2+)</name>
        <dbReference type="ChEBI" id="CHEBI:18420"/>
    </ligand>
</feature>
<name>PNP_RICFE</name>
<comment type="function">
    <text evidence="1">Involved in mRNA degradation. Catalyzes the phosphorolysis of single-stranded polyribonucleotides processively in the 3'- to 5'-direction.</text>
</comment>
<comment type="catalytic activity">
    <reaction evidence="1">
        <text>RNA(n+1) + phosphate = RNA(n) + a ribonucleoside 5'-diphosphate</text>
        <dbReference type="Rhea" id="RHEA:22096"/>
        <dbReference type="Rhea" id="RHEA-COMP:14527"/>
        <dbReference type="Rhea" id="RHEA-COMP:17342"/>
        <dbReference type="ChEBI" id="CHEBI:43474"/>
        <dbReference type="ChEBI" id="CHEBI:57930"/>
        <dbReference type="ChEBI" id="CHEBI:140395"/>
        <dbReference type="EC" id="2.7.7.8"/>
    </reaction>
</comment>
<comment type="cofactor">
    <cofactor evidence="1">
        <name>Mg(2+)</name>
        <dbReference type="ChEBI" id="CHEBI:18420"/>
    </cofactor>
</comment>
<comment type="subcellular location">
    <subcellularLocation>
        <location evidence="1">Cytoplasm</location>
    </subcellularLocation>
</comment>
<comment type="similarity">
    <text evidence="1">Belongs to the polyribonucleotide nucleotidyltransferase family.</text>
</comment>
<keyword id="KW-0963">Cytoplasm</keyword>
<keyword id="KW-0460">Magnesium</keyword>
<keyword id="KW-0479">Metal-binding</keyword>
<keyword id="KW-0548">Nucleotidyltransferase</keyword>
<keyword id="KW-0694">RNA-binding</keyword>
<keyword id="KW-0808">Transferase</keyword>
<proteinExistence type="inferred from homology"/>
<organism>
    <name type="scientific">Rickettsia felis (strain ATCC VR-1525 / URRWXCal2)</name>
    <name type="common">Rickettsia azadi</name>
    <dbReference type="NCBI Taxonomy" id="315456"/>
    <lineage>
        <taxon>Bacteria</taxon>
        <taxon>Pseudomonadati</taxon>
        <taxon>Pseudomonadota</taxon>
        <taxon>Alphaproteobacteria</taxon>
        <taxon>Rickettsiales</taxon>
        <taxon>Rickettsiaceae</taxon>
        <taxon>Rickettsieae</taxon>
        <taxon>Rickettsia</taxon>
        <taxon>spotted fever group</taxon>
    </lineage>
</organism>
<evidence type="ECO:0000255" key="1">
    <source>
        <dbReference type="HAMAP-Rule" id="MF_01595"/>
    </source>
</evidence>
<evidence type="ECO:0000256" key="2">
    <source>
        <dbReference type="SAM" id="MobiDB-lite"/>
    </source>
</evidence>
<protein>
    <recommendedName>
        <fullName evidence="1">Polyribonucleotide nucleotidyltransferase</fullName>
        <ecNumber evidence="1">2.7.7.8</ecNumber>
    </recommendedName>
    <alternativeName>
        <fullName evidence="1">Polynucleotide phosphorylase</fullName>
        <shortName evidence="1">PNPase</shortName>
    </alternativeName>
</protein>
<sequence>MFNEITKSVTWNGKVLELSTGKIARQADGAVTVKMGNSVLLCTAVVAKKAKEGIGFFPLTINYREMAYATGKIPGGFFKREGKASDREVLVSRLIDRPIRPLFHPAFVNETHVTCSVLSYDPETPVDILAIIGASAALSLSPAPYLEIVAASKVGLINGEFVLNPTLELLKTSQLDLVVAGTSDSVMMVESEAHLLAEEQMLEAVKFGFESFQPVIKIIKELAEEAKKPKLEMQDLYPASLKKEIEKLFVKEIEQAFAIKSKQERSTNLDLIPEKVLTHFVSDIENKKYSNYQIESALKSIESDILRNEILEKNRRIDGRSTTDIRQIACEIGLLPSAHGSALFTRGETQSLVSTTFGTSLDEQIVDSLEGEYKERFMLNYIFPPYSVNEAMPMKAPSRREVGHGKLAWRAINPILPNKVQFPYSIRVVAETTESNGSSSMATVCGSSLALMYAGVPIKAPVAGIAMGLVKEGKKFAVLSDILGDEDYFGDMDFKVAGTSEGITALQMDIKISGVDFKIMTVALEQARLGRLHILEQMNKVISKPNSELSKNAPSTTTIKIDKDKIRDIIGPGGKVIKEICETSGAKIDISDDGSVSVYASDRDKLKVALDKIKAIAVEPEIGEIFNGTVMKVLDSGAFINYLGNKDGFVHISEISEERIETVSSVLKQGDIVKVKLIGFDNKGKAKLTIKNADKDKSSNNPKPKNNVNNAKENSEPERRDSSKKRAWNEDSNNDKEEAITERKYFN</sequence>